<feature type="signal peptide">
    <location>
        <begin position="1"/>
        <end position="31"/>
    </location>
</feature>
<feature type="chain" id="PRO_0000008588" description="Acetylcholinesterase">
    <location>
        <begin position="32"/>
        <end position="614"/>
    </location>
</feature>
<feature type="active site" description="Acyl-ester intermediate">
    <location>
        <position position="234"/>
    </location>
</feature>
<feature type="active site" description="Charge relay system">
    <location>
        <position position="365"/>
    </location>
</feature>
<feature type="active site" description="Charge relay system">
    <location>
        <position position="478"/>
    </location>
</feature>
<feature type="glycosylation site" description="N-linked (GlcNAc...) asparagine" evidence="2">
    <location>
        <position position="296"/>
    </location>
</feature>
<feature type="glycosylation site" description="N-linked (GlcNAc...) asparagine">
    <location>
        <position position="381"/>
    </location>
</feature>
<feature type="glycosylation site" description="N-linked (GlcNAc...) asparagine">
    <location>
        <position position="495"/>
    </location>
</feature>
<feature type="disulfide bond">
    <location>
        <begin position="100"/>
        <end position="127"/>
    </location>
</feature>
<feature type="disulfide bond">
    <location>
        <begin position="288"/>
        <end position="303"/>
    </location>
</feature>
<feature type="disulfide bond">
    <location>
        <begin position="440"/>
        <end position="560"/>
    </location>
</feature>
<feature type="disulfide bond" description="Interchain" evidence="1">
    <location>
        <position position="611"/>
    </location>
</feature>
<feature type="helix" evidence="10">
    <location>
        <begin position="32"/>
        <end position="34"/>
    </location>
</feature>
<feature type="helix" evidence="10">
    <location>
        <begin position="37"/>
        <end position="39"/>
    </location>
</feature>
<feature type="strand" evidence="10">
    <location>
        <begin position="40"/>
        <end position="43"/>
    </location>
</feature>
<feature type="strand" evidence="10">
    <location>
        <begin position="46"/>
        <end position="49"/>
    </location>
</feature>
<feature type="strand" evidence="10">
    <location>
        <begin position="51"/>
        <end position="55"/>
    </location>
</feature>
<feature type="strand" evidence="10">
    <location>
        <begin position="58"/>
        <end position="67"/>
    </location>
</feature>
<feature type="helix" evidence="10">
    <location>
        <begin position="74"/>
        <end position="76"/>
    </location>
</feature>
<feature type="strand" evidence="10">
    <location>
        <begin position="88"/>
        <end position="92"/>
    </location>
</feature>
<feature type="strand" evidence="10">
    <location>
        <begin position="99"/>
        <end position="101"/>
    </location>
</feature>
<feature type="strand" evidence="13">
    <location>
        <begin position="107"/>
        <end position="110"/>
    </location>
</feature>
<feature type="helix" evidence="10">
    <location>
        <begin position="112"/>
        <end position="115"/>
    </location>
</feature>
<feature type="strand" evidence="10">
    <location>
        <begin position="123"/>
        <end position="125"/>
    </location>
</feature>
<feature type="strand" evidence="10">
    <location>
        <begin position="129"/>
        <end position="137"/>
    </location>
</feature>
<feature type="strand" evidence="10">
    <location>
        <begin position="143"/>
        <end position="149"/>
    </location>
</feature>
<feature type="turn" evidence="10">
    <location>
        <begin position="153"/>
        <end position="155"/>
    </location>
</feature>
<feature type="helix" evidence="10">
    <location>
        <begin position="162"/>
        <end position="164"/>
    </location>
</feature>
<feature type="helix" evidence="10">
    <location>
        <begin position="167"/>
        <end position="173"/>
    </location>
</feature>
<feature type="strand" evidence="10">
    <location>
        <begin position="176"/>
        <end position="180"/>
    </location>
</feature>
<feature type="helix" evidence="10">
    <location>
        <begin position="185"/>
        <end position="189"/>
    </location>
</feature>
<feature type="strand" evidence="11">
    <location>
        <begin position="196"/>
        <end position="198"/>
    </location>
</feature>
<feature type="helix" evidence="10">
    <location>
        <begin position="202"/>
        <end position="217"/>
    </location>
</feature>
<feature type="helix" evidence="10">
    <location>
        <begin position="218"/>
        <end position="221"/>
    </location>
</feature>
<feature type="strand" evidence="10">
    <location>
        <begin position="223"/>
        <end position="233"/>
    </location>
</feature>
<feature type="helix" evidence="10">
    <location>
        <begin position="235"/>
        <end position="244"/>
    </location>
</feature>
<feature type="helix" evidence="10">
    <location>
        <begin position="247"/>
        <end position="250"/>
    </location>
</feature>
<feature type="strand" evidence="10">
    <location>
        <begin position="254"/>
        <end position="260"/>
    </location>
</feature>
<feature type="strand" evidence="10">
    <location>
        <begin position="263"/>
        <end position="268"/>
    </location>
</feature>
<feature type="helix" evidence="10">
    <location>
        <begin position="272"/>
        <end position="285"/>
    </location>
</feature>
<feature type="turn" evidence="7">
    <location>
        <begin position="286"/>
        <end position="290"/>
    </location>
</feature>
<feature type="strand" evidence="7">
    <location>
        <begin position="291"/>
        <end position="293"/>
    </location>
</feature>
<feature type="helix" evidence="10">
    <location>
        <begin position="297"/>
        <end position="306"/>
    </location>
</feature>
<feature type="helix" evidence="10">
    <location>
        <begin position="309"/>
        <end position="315"/>
    </location>
</feature>
<feature type="helix" evidence="10">
    <location>
        <begin position="316"/>
        <end position="318"/>
    </location>
</feature>
<feature type="strand" evidence="10">
    <location>
        <begin position="321"/>
        <end position="323"/>
    </location>
</feature>
<feature type="strand" evidence="10">
    <location>
        <begin position="336"/>
        <end position="341"/>
    </location>
</feature>
<feature type="helix" evidence="10">
    <location>
        <begin position="343"/>
        <end position="349"/>
    </location>
</feature>
<feature type="strand" evidence="10">
    <location>
        <begin position="356"/>
        <end position="362"/>
    </location>
</feature>
<feature type="turn" evidence="12">
    <location>
        <begin position="363"/>
        <end position="366"/>
    </location>
</feature>
<feature type="helix" evidence="10">
    <location>
        <begin position="367"/>
        <end position="370"/>
    </location>
</feature>
<feature type="turn" evidence="10">
    <location>
        <begin position="371"/>
        <end position="373"/>
    </location>
</feature>
<feature type="strand" evidence="10">
    <location>
        <begin position="379"/>
        <end position="381"/>
    </location>
</feature>
<feature type="helix" evidence="10">
    <location>
        <begin position="387"/>
        <end position="397"/>
    </location>
</feature>
<feature type="helix" evidence="10">
    <location>
        <begin position="403"/>
        <end position="413"/>
    </location>
</feature>
<feature type="strand" evidence="6">
    <location>
        <begin position="416"/>
        <end position="418"/>
    </location>
</feature>
<feature type="helix" evidence="10">
    <location>
        <begin position="422"/>
        <end position="437"/>
    </location>
</feature>
<feature type="helix" evidence="10">
    <location>
        <begin position="439"/>
        <end position="451"/>
    </location>
</feature>
<feature type="strand" evidence="10">
    <location>
        <begin position="455"/>
        <end position="461"/>
    </location>
</feature>
<feature type="helix" evidence="10">
    <location>
        <begin position="472"/>
        <end position="474"/>
    </location>
</feature>
<feature type="turn" evidence="10">
    <location>
        <begin position="478"/>
        <end position="481"/>
    </location>
</feature>
<feature type="helix" evidence="10">
    <location>
        <begin position="482"/>
        <end position="485"/>
    </location>
</feature>
<feature type="helix" evidence="10">
    <location>
        <begin position="488"/>
        <end position="490"/>
    </location>
</feature>
<feature type="helix" evidence="10">
    <location>
        <begin position="492"/>
        <end position="494"/>
    </location>
</feature>
<feature type="helix" evidence="10">
    <location>
        <begin position="498"/>
        <end position="517"/>
    </location>
</feature>
<feature type="turn" evidence="8">
    <location>
        <begin position="523"/>
        <end position="525"/>
    </location>
</feature>
<feature type="strand" evidence="9">
    <location>
        <begin position="526"/>
        <end position="528"/>
    </location>
</feature>
<feature type="turn" evidence="10">
    <location>
        <begin position="536"/>
        <end position="538"/>
    </location>
</feature>
<feature type="strand" evidence="10">
    <location>
        <begin position="540"/>
        <end position="547"/>
    </location>
</feature>
<feature type="strand" evidence="10">
    <location>
        <begin position="550"/>
        <end position="553"/>
    </location>
</feature>
<feature type="helix" evidence="10">
    <location>
        <begin position="557"/>
        <end position="564"/>
    </location>
</feature>
<feature type="helix" evidence="10">
    <location>
        <begin position="567"/>
        <end position="570"/>
    </location>
</feature>
<keyword id="KW-0002">3D-structure</keyword>
<keyword id="KW-0025">Alternative splicing</keyword>
<keyword id="KW-1003">Cell membrane</keyword>
<keyword id="KW-1015">Disulfide bond</keyword>
<keyword id="KW-0325">Glycoprotein</keyword>
<keyword id="KW-0336">GPI-anchor</keyword>
<keyword id="KW-0378">Hydrolase</keyword>
<keyword id="KW-0449">Lipoprotein</keyword>
<keyword id="KW-0472">Membrane</keyword>
<keyword id="KW-0531">Neurotransmitter degradation</keyword>
<keyword id="KW-1185">Reference proteome</keyword>
<keyword id="KW-0964">Secreted</keyword>
<keyword id="KW-0719">Serine esterase</keyword>
<keyword id="KW-0732">Signal</keyword>
<keyword id="KW-0770">Synapse</keyword>
<gene>
    <name type="primary">Ache</name>
</gene>
<name>ACES_MOUSE</name>
<evidence type="ECO:0000250" key="1"/>
<evidence type="ECO:0000255" key="2"/>
<evidence type="ECO:0000269" key="3">
    <source>
    </source>
</evidence>
<evidence type="ECO:0000269" key="4">
    <source>
    </source>
</evidence>
<evidence type="ECO:0000305" key="5"/>
<evidence type="ECO:0007829" key="6">
    <source>
        <dbReference type="PDB" id="1KU6"/>
    </source>
</evidence>
<evidence type="ECO:0007829" key="7">
    <source>
        <dbReference type="PDB" id="4A16"/>
    </source>
</evidence>
<evidence type="ECO:0007829" key="8">
    <source>
        <dbReference type="PDB" id="4ARB"/>
    </source>
</evidence>
<evidence type="ECO:0007829" key="9">
    <source>
        <dbReference type="PDB" id="4B82"/>
    </source>
</evidence>
<evidence type="ECO:0007829" key="10">
    <source>
        <dbReference type="PDB" id="5DTI"/>
    </source>
</evidence>
<evidence type="ECO:0007829" key="11">
    <source>
        <dbReference type="PDB" id="5EHZ"/>
    </source>
</evidence>
<evidence type="ECO:0007829" key="12">
    <source>
        <dbReference type="PDB" id="5EIE"/>
    </source>
</evidence>
<evidence type="ECO:0007829" key="13">
    <source>
        <dbReference type="PDB" id="7R4E"/>
    </source>
</evidence>
<reference key="1">
    <citation type="journal article" date="1990" name="Neuron">
        <title>Molecular cloning of mouse acetylcholinesterase: tissue distribution of alternatively spliced mRNA species.</title>
        <authorList>
            <person name="Rachinsky T.L."/>
            <person name="Camp S."/>
            <person name="Li Y."/>
            <person name="Ekstroem T.J."/>
            <person name="Newton M."/>
            <person name="Taylor P."/>
        </authorList>
    </citation>
    <scope>NUCLEOTIDE SEQUENCE [MRNA]</scope>
</reference>
<reference key="2">
    <citation type="journal article" date="2001" name="Nucleic Acids Res.">
        <title>Comparative analysis of the gene-dense ACHE/TFR2 region on human chromosome 7q22 with the orthologous region on mouse chromosome 5.</title>
        <authorList>
            <person name="Wilson M.D."/>
            <person name="Riemer C."/>
            <person name="Martindale D.W."/>
            <person name="Schnupf P."/>
            <person name="Boright A.P."/>
            <person name="Cheung T.L."/>
            <person name="Hardy D.M."/>
            <person name="Schwartz S."/>
            <person name="Scherer S.W."/>
            <person name="Tsui L.-C."/>
            <person name="Miller W."/>
            <person name="Koop B.F."/>
        </authorList>
    </citation>
    <scope>NUCLEOTIDE SEQUENCE [GENOMIC DNA]</scope>
    <source>
        <strain>129/Sv</strain>
    </source>
</reference>
<reference key="3">
    <citation type="journal article" date="2004" name="Genome Res.">
        <title>The status, quality, and expansion of the NIH full-length cDNA project: the Mammalian Gene Collection (MGC).</title>
        <authorList>
            <consortium name="The MGC Project Team"/>
        </authorList>
    </citation>
    <scope>NUCLEOTIDE SEQUENCE [LARGE SCALE MRNA]</scope>
    <source>
        <tissue>Retina</tissue>
    </source>
</reference>
<reference key="4">
    <citation type="journal article" date="2002" name="Neuron">
        <title>PRiMA: the membrane anchor of acetylcholinesterase in the brain.</title>
        <authorList>
            <person name="Perrier A.L."/>
            <person name="Massoulie J."/>
            <person name="Krejci E."/>
        </authorList>
    </citation>
    <scope>INTERACTION WITH PRIMA1</scope>
</reference>
<reference key="5">
    <citation type="journal article" date="2010" name="Cell">
        <title>A tissue-specific atlas of mouse protein phosphorylation and expression.</title>
        <authorList>
            <person name="Huttlin E.L."/>
            <person name="Jedrychowski M.P."/>
            <person name="Elias J.E."/>
            <person name="Goswami T."/>
            <person name="Rad R."/>
            <person name="Beausoleil S.A."/>
            <person name="Villen J."/>
            <person name="Haas W."/>
            <person name="Sowa M.E."/>
            <person name="Gygi S.P."/>
        </authorList>
    </citation>
    <scope>IDENTIFICATION BY MASS SPECTROMETRY [LARGE SCALE ANALYSIS]</scope>
    <source>
        <tissue>Brain</tissue>
    </source>
</reference>
<reference key="6">
    <citation type="journal article" date="1995" name="Cell">
        <title>Acetylcholinesterase inhibition by fasciculin: crystal structure of the complex.</title>
        <authorList>
            <person name="Bourne Y."/>
            <person name="Taylor P."/>
            <person name="Marchot P."/>
        </authorList>
    </citation>
    <scope>X-RAY CRYSTALLOGRAPHY (3.2 ANGSTROMS) OF COMPLEX WITH FASCICULIN-2</scope>
    <scope>DISULFIDE BOND</scope>
</reference>
<reference key="7">
    <citation type="journal article" date="1999" name="J. Biol. Chem.">
        <title>Crystal structure of mouse acetylcholinesterase. A peripheral site-occluding loop in a tetrameric assembly.</title>
        <authorList>
            <person name="Bourne Y."/>
            <person name="Taylor P."/>
            <person name="Bougis P.E."/>
            <person name="Marchot P."/>
        </authorList>
    </citation>
    <scope>X-RAY CRYSTALLOGRAPHY (2.9 ANGSTROMS)</scope>
</reference>
<reference key="8">
    <citation type="journal article" date="2003" name="EMBO J.">
        <title>Structural insights into ligand interactions at the acetylcholinesterase peripheral anionic site.</title>
        <authorList>
            <person name="Bourne Y."/>
            <person name="Taylor P."/>
            <person name="Radic Z."/>
            <person name="Marchot P."/>
        </authorList>
    </citation>
    <scope>X-RAY CRYSTALLOGRAPHY (2.25 ANGSTROMS) OF 34-573 IN COMPLEX WITH INHIBITOR</scope>
</reference>
<proteinExistence type="evidence at protein level"/>
<dbReference type="EC" id="3.1.1.7"/>
<dbReference type="EMBL" id="X56518">
    <property type="protein sequence ID" value="CAA39867.1"/>
    <property type="molecule type" value="mRNA"/>
</dbReference>
<dbReference type="EMBL" id="AF312033">
    <property type="protein sequence ID" value="AAK28816.1"/>
    <property type="molecule type" value="Genomic_DNA"/>
</dbReference>
<dbReference type="EMBL" id="BC046327">
    <property type="protein sequence ID" value="AAH46327.1"/>
    <property type="molecule type" value="mRNA"/>
</dbReference>
<dbReference type="CCDS" id="CCDS19763.1">
    <molecule id="P21836-1"/>
</dbReference>
<dbReference type="PIR" id="JH0314">
    <property type="entry name" value="JH0314"/>
</dbReference>
<dbReference type="RefSeq" id="NP_001276939.1">
    <molecule id="P21836-1"/>
    <property type="nucleotide sequence ID" value="NM_001290010.1"/>
</dbReference>
<dbReference type="RefSeq" id="NP_033729.1">
    <molecule id="P21836-1"/>
    <property type="nucleotide sequence ID" value="NM_009599.4"/>
</dbReference>
<dbReference type="PDB" id="1C2B">
    <property type="method" value="X-ray"/>
    <property type="resolution" value="4.50 A"/>
    <property type="chains" value="A=35-574"/>
</dbReference>
<dbReference type="PDB" id="1C2O">
    <property type="method" value="X-ray"/>
    <property type="resolution" value="4.20 A"/>
    <property type="chains" value="A/B/C/D=36-574"/>
</dbReference>
<dbReference type="PDB" id="1J06">
    <property type="method" value="X-ray"/>
    <property type="resolution" value="2.35 A"/>
    <property type="chains" value="A/B=32-574"/>
</dbReference>
<dbReference type="PDB" id="1J07">
    <property type="method" value="X-ray"/>
    <property type="resolution" value="2.35 A"/>
    <property type="chains" value="A/B=32-574"/>
</dbReference>
<dbReference type="PDB" id="1KU6">
    <property type="method" value="X-ray"/>
    <property type="resolution" value="2.50 A"/>
    <property type="chains" value="A=32-580"/>
</dbReference>
<dbReference type="PDB" id="1MAA">
    <property type="method" value="X-ray"/>
    <property type="resolution" value="2.90 A"/>
    <property type="chains" value="A/B/C/D=32-578"/>
</dbReference>
<dbReference type="PDB" id="1MAH">
    <property type="method" value="X-ray"/>
    <property type="resolution" value="3.20 A"/>
    <property type="chains" value="A=32-574"/>
</dbReference>
<dbReference type="PDB" id="1N5M">
    <property type="method" value="X-ray"/>
    <property type="resolution" value="2.20 A"/>
    <property type="chains" value="A/B=32-572"/>
</dbReference>
<dbReference type="PDB" id="1N5R">
    <property type="method" value="X-ray"/>
    <property type="resolution" value="2.25 A"/>
    <property type="chains" value="A/B=32-574"/>
</dbReference>
<dbReference type="PDB" id="1Q83">
    <property type="method" value="X-ray"/>
    <property type="resolution" value="2.65 A"/>
    <property type="chains" value="A/B=1-580"/>
</dbReference>
<dbReference type="PDB" id="1Q84">
    <property type="method" value="X-ray"/>
    <property type="resolution" value="2.45 A"/>
    <property type="chains" value="A/B=1-580"/>
</dbReference>
<dbReference type="PDB" id="2C0P">
    <property type="method" value="X-ray"/>
    <property type="resolution" value="2.50 A"/>
    <property type="chains" value="A/B=32-574"/>
</dbReference>
<dbReference type="PDB" id="2C0Q">
    <property type="method" value="X-ray"/>
    <property type="resolution" value="2.50 A"/>
    <property type="chains" value="A/B=32-574"/>
</dbReference>
<dbReference type="PDB" id="2GYU">
    <property type="method" value="X-ray"/>
    <property type="resolution" value="2.20 A"/>
    <property type="chains" value="A/B=32-574"/>
</dbReference>
<dbReference type="PDB" id="2GYV">
    <property type="method" value="X-ray"/>
    <property type="resolution" value="2.50 A"/>
    <property type="chains" value="A/B=32-574"/>
</dbReference>
<dbReference type="PDB" id="2GYW">
    <property type="method" value="X-ray"/>
    <property type="resolution" value="2.40 A"/>
    <property type="chains" value="A/B=32-574"/>
</dbReference>
<dbReference type="PDB" id="2H9Y">
    <property type="method" value="X-ray"/>
    <property type="resolution" value="2.40 A"/>
    <property type="chains" value="A/B=32-574"/>
</dbReference>
<dbReference type="PDB" id="2HA0">
    <property type="method" value="X-ray"/>
    <property type="resolution" value="2.20 A"/>
    <property type="chains" value="A/B=32-574"/>
</dbReference>
<dbReference type="PDB" id="2HA2">
    <property type="method" value="X-ray"/>
    <property type="resolution" value="2.05 A"/>
    <property type="chains" value="A/B=32-574"/>
</dbReference>
<dbReference type="PDB" id="2HA3">
    <property type="method" value="X-ray"/>
    <property type="resolution" value="2.25 A"/>
    <property type="chains" value="A/B=32-574"/>
</dbReference>
<dbReference type="PDB" id="2HA4">
    <property type="method" value="X-ray"/>
    <property type="resolution" value="2.56 A"/>
    <property type="chains" value="A/B=32-574"/>
</dbReference>
<dbReference type="PDB" id="2HA5">
    <property type="method" value="X-ray"/>
    <property type="resolution" value="2.15 A"/>
    <property type="chains" value="A/B=32-574"/>
</dbReference>
<dbReference type="PDB" id="2HA6">
    <property type="method" value="X-ray"/>
    <property type="resolution" value="2.25 A"/>
    <property type="chains" value="A/B=32-574"/>
</dbReference>
<dbReference type="PDB" id="2HA7">
    <property type="method" value="X-ray"/>
    <property type="resolution" value="2.66 A"/>
    <property type="chains" value="A/B=32-574"/>
</dbReference>
<dbReference type="PDB" id="2JEY">
    <property type="method" value="X-ray"/>
    <property type="resolution" value="2.70 A"/>
    <property type="chains" value="A/B=32-574"/>
</dbReference>
<dbReference type="PDB" id="2JEZ">
    <property type="method" value="X-ray"/>
    <property type="resolution" value="2.60 A"/>
    <property type="chains" value="A/B=32-574"/>
</dbReference>
<dbReference type="PDB" id="2JF0">
    <property type="method" value="X-ray"/>
    <property type="resolution" value="2.50 A"/>
    <property type="chains" value="A/B=32-574"/>
</dbReference>
<dbReference type="PDB" id="2JGE">
    <property type="method" value="X-ray"/>
    <property type="resolution" value="2.60 A"/>
    <property type="chains" value="A/B=32-574"/>
</dbReference>
<dbReference type="PDB" id="2JGF">
    <property type="method" value="X-ray"/>
    <property type="resolution" value="2.50 A"/>
    <property type="chains" value="A/B=32-574"/>
</dbReference>
<dbReference type="PDB" id="2JGI">
    <property type="method" value="X-ray"/>
    <property type="resolution" value="2.90 A"/>
    <property type="chains" value="A/B=32-574"/>
</dbReference>
<dbReference type="PDB" id="2JGJ">
    <property type="method" value="X-ray"/>
    <property type="resolution" value="2.50 A"/>
    <property type="chains" value="A/B=32-574"/>
</dbReference>
<dbReference type="PDB" id="2JGK">
    <property type="method" value="X-ray"/>
    <property type="resolution" value="2.90 A"/>
    <property type="chains" value="A/B=32-574"/>
</dbReference>
<dbReference type="PDB" id="2JGL">
    <property type="method" value="X-ray"/>
    <property type="resolution" value="2.60 A"/>
    <property type="chains" value="A/B=32-574"/>
</dbReference>
<dbReference type="PDB" id="2JGM">
    <property type="method" value="X-ray"/>
    <property type="resolution" value="2.90 A"/>
    <property type="chains" value="A/B=32-574"/>
</dbReference>
<dbReference type="PDB" id="2WHP">
    <property type="method" value="X-ray"/>
    <property type="resolution" value="2.20 A"/>
    <property type="chains" value="A/B=32-573"/>
</dbReference>
<dbReference type="PDB" id="2WHQ">
    <property type="method" value="X-ray"/>
    <property type="resolution" value="2.15 A"/>
    <property type="chains" value="A/B=32-574"/>
</dbReference>
<dbReference type="PDB" id="2WHR">
    <property type="method" value="X-ray"/>
    <property type="resolution" value="2.54 A"/>
    <property type="chains" value="A/B=32-574"/>
</dbReference>
<dbReference type="PDB" id="2WLS">
    <property type="method" value="X-ray"/>
    <property type="resolution" value="2.60 A"/>
    <property type="chains" value="A/B=32-574"/>
</dbReference>
<dbReference type="PDB" id="2WU3">
    <property type="method" value="X-ray"/>
    <property type="resolution" value="2.70 A"/>
    <property type="chains" value="A/B=32-574"/>
</dbReference>
<dbReference type="PDB" id="2WU4">
    <property type="method" value="X-ray"/>
    <property type="resolution" value="2.40 A"/>
    <property type="chains" value="A/B=32-574"/>
</dbReference>
<dbReference type="PDB" id="2XUD">
    <property type="method" value="X-ray"/>
    <property type="resolution" value="2.65 A"/>
    <property type="chains" value="A/B=32-574"/>
</dbReference>
<dbReference type="PDB" id="2XUF">
    <property type="method" value="X-ray"/>
    <property type="resolution" value="2.55 A"/>
    <property type="chains" value="A/B=32-575"/>
</dbReference>
<dbReference type="PDB" id="2XUG">
    <property type="method" value="X-ray"/>
    <property type="resolution" value="2.60 A"/>
    <property type="chains" value="A/B=32-575"/>
</dbReference>
<dbReference type="PDB" id="2XUH">
    <property type="method" value="X-ray"/>
    <property type="resolution" value="2.65 A"/>
    <property type="chains" value="A/B=32-574"/>
</dbReference>
<dbReference type="PDB" id="2XUI">
    <property type="method" value="X-ray"/>
    <property type="resolution" value="2.60 A"/>
    <property type="chains" value="A/B=32-574"/>
</dbReference>
<dbReference type="PDB" id="2XUJ">
    <property type="method" value="X-ray"/>
    <property type="resolution" value="2.65 A"/>
    <property type="chains" value="A/B=32-574"/>
</dbReference>
<dbReference type="PDB" id="2XUK">
    <property type="method" value="X-ray"/>
    <property type="resolution" value="2.75 A"/>
    <property type="chains" value="A/B=32-574"/>
</dbReference>
<dbReference type="PDB" id="2XUO">
    <property type="method" value="X-ray"/>
    <property type="resolution" value="2.80 A"/>
    <property type="chains" value="A/B=32-574"/>
</dbReference>
<dbReference type="PDB" id="2XUP">
    <property type="method" value="X-ray"/>
    <property type="resolution" value="2.70 A"/>
    <property type="chains" value="A/B=32-574"/>
</dbReference>
<dbReference type="PDB" id="2XUQ">
    <property type="method" value="X-ray"/>
    <property type="resolution" value="2.70 A"/>
    <property type="chains" value="A/B=32-574"/>
</dbReference>
<dbReference type="PDB" id="2Y2U">
    <property type="method" value="X-ray"/>
    <property type="resolution" value="2.60 A"/>
    <property type="chains" value="A/B=32-574"/>
</dbReference>
<dbReference type="PDB" id="2Y2V">
    <property type="method" value="X-ray"/>
    <property type="resolution" value="2.45 A"/>
    <property type="chains" value="A/B=32-574"/>
</dbReference>
<dbReference type="PDB" id="3DL4">
    <property type="method" value="X-ray"/>
    <property type="resolution" value="2.50 A"/>
    <property type="chains" value="A/B=32-574"/>
</dbReference>
<dbReference type="PDB" id="3DL7">
    <property type="method" value="X-ray"/>
    <property type="resolution" value="2.50 A"/>
    <property type="chains" value="A/B=32-574"/>
</dbReference>
<dbReference type="PDB" id="3ZLT">
    <property type="method" value="X-ray"/>
    <property type="resolution" value="2.60 A"/>
    <property type="chains" value="A/B=32-574"/>
</dbReference>
<dbReference type="PDB" id="3ZLU">
    <property type="method" value="X-ray"/>
    <property type="resolution" value="2.60 A"/>
    <property type="chains" value="A/B=32-574"/>
</dbReference>
<dbReference type="PDB" id="3ZLV">
    <property type="method" value="X-ray"/>
    <property type="resolution" value="2.50 A"/>
    <property type="chains" value="A/B=32-574"/>
</dbReference>
<dbReference type="PDB" id="4A16">
    <property type="method" value="X-ray"/>
    <property type="resolution" value="2.65 A"/>
    <property type="chains" value="A/B/C/D=35-574"/>
</dbReference>
<dbReference type="PDB" id="4A23">
    <property type="method" value="X-ray"/>
    <property type="resolution" value="2.40 A"/>
    <property type="chains" value="A/B=32-574"/>
</dbReference>
<dbReference type="PDB" id="4ARA">
    <property type="method" value="X-ray"/>
    <property type="resolution" value="2.50 A"/>
    <property type="chains" value="A/B=32-574"/>
</dbReference>
<dbReference type="PDB" id="4ARB">
    <property type="method" value="X-ray"/>
    <property type="resolution" value="2.25 A"/>
    <property type="chains" value="A/B=32-574"/>
</dbReference>
<dbReference type="PDB" id="4B7Z">
    <property type="method" value="X-ray"/>
    <property type="resolution" value="2.30 A"/>
    <property type="chains" value="A/B=32-574"/>
</dbReference>
<dbReference type="PDB" id="4B80">
    <property type="method" value="X-ray"/>
    <property type="resolution" value="2.50 A"/>
    <property type="chains" value="A/B=32-574"/>
</dbReference>
<dbReference type="PDB" id="4B81">
    <property type="method" value="X-ray"/>
    <property type="resolution" value="2.80 A"/>
    <property type="chains" value="A/B=32-574"/>
</dbReference>
<dbReference type="PDB" id="4B82">
    <property type="method" value="X-ray"/>
    <property type="resolution" value="2.10 A"/>
    <property type="chains" value="A/B=32-574"/>
</dbReference>
<dbReference type="PDB" id="4B83">
    <property type="method" value="X-ray"/>
    <property type="resolution" value="2.40 A"/>
    <property type="chains" value="A/B=32-574"/>
</dbReference>
<dbReference type="PDB" id="4B84">
    <property type="method" value="X-ray"/>
    <property type="resolution" value="2.60 A"/>
    <property type="chains" value="A/B=32-574"/>
</dbReference>
<dbReference type="PDB" id="4B85">
    <property type="method" value="X-ray"/>
    <property type="resolution" value="2.10 A"/>
    <property type="chains" value="A/B=32-574"/>
</dbReference>
<dbReference type="PDB" id="4BC0">
    <property type="method" value="X-ray"/>
    <property type="resolution" value="3.35 A"/>
    <property type="chains" value="A/B/C/D=32-574"/>
</dbReference>
<dbReference type="PDB" id="4BC1">
    <property type="method" value="X-ray"/>
    <property type="resolution" value="2.95 A"/>
    <property type="chains" value="A/B/C/D=32-574"/>
</dbReference>
<dbReference type="PDB" id="4BTL">
    <property type="method" value="X-ray"/>
    <property type="resolution" value="2.50 A"/>
    <property type="chains" value="A/B=32-574"/>
</dbReference>
<dbReference type="PDB" id="5DTI">
    <property type="method" value="X-ray"/>
    <property type="resolution" value="2.00 A"/>
    <property type="chains" value="A/B=32-573"/>
</dbReference>
<dbReference type="PDB" id="5DTJ">
    <property type="method" value="X-ray"/>
    <property type="resolution" value="2.71 A"/>
    <property type="chains" value="A/B=32-573"/>
</dbReference>
<dbReference type="PDB" id="5EHN">
    <property type="method" value="X-ray"/>
    <property type="resolution" value="2.60 A"/>
    <property type="chains" value="A/B=32-574"/>
</dbReference>
<dbReference type="PDB" id="5EHQ">
    <property type="method" value="X-ray"/>
    <property type="resolution" value="2.50 A"/>
    <property type="chains" value="A/B=32-574"/>
</dbReference>
<dbReference type="PDB" id="5EHZ">
    <property type="method" value="X-ray"/>
    <property type="resolution" value="2.50 A"/>
    <property type="chains" value="A/B=32-574"/>
</dbReference>
<dbReference type="PDB" id="5EIA">
    <property type="method" value="X-ray"/>
    <property type="resolution" value="2.70 A"/>
    <property type="chains" value="A/B=32-574"/>
</dbReference>
<dbReference type="PDB" id="5EIE">
    <property type="method" value="X-ray"/>
    <property type="resolution" value="2.10 A"/>
    <property type="chains" value="A/B=32-574"/>
</dbReference>
<dbReference type="PDB" id="5EIH">
    <property type="method" value="X-ray"/>
    <property type="resolution" value="2.70 A"/>
    <property type="chains" value="A/B=32-574"/>
</dbReference>
<dbReference type="PDB" id="5FKJ">
    <property type="method" value="X-ray"/>
    <property type="resolution" value="3.13 A"/>
    <property type="chains" value="A/B/C/D=32-574"/>
</dbReference>
<dbReference type="PDB" id="5FPP">
    <property type="method" value="X-ray"/>
    <property type="resolution" value="2.40 A"/>
    <property type="chains" value="A/B=32-574"/>
</dbReference>
<dbReference type="PDB" id="5FUM">
    <property type="method" value="X-ray"/>
    <property type="resolution" value="2.50 A"/>
    <property type="chains" value="A/B=32-574"/>
</dbReference>
<dbReference type="PDB" id="5HCU">
    <property type="method" value="X-ray"/>
    <property type="resolution" value="2.42 A"/>
    <property type="chains" value="A/B=32-571"/>
</dbReference>
<dbReference type="PDB" id="5OV9">
    <property type="method" value="X-ray"/>
    <property type="resolution" value="2.40 A"/>
    <property type="chains" value="A/B=32-574"/>
</dbReference>
<dbReference type="PDB" id="6FSD">
    <property type="method" value="X-ray"/>
    <property type="resolution" value="2.70 A"/>
    <property type="chains" value="A/B=32-574"/>
</dbReference>
<dbReference type="PDB" id="6FSE">
    <property type="method" value="X-ray"/>
    <property type="resolution" value="2.70 A"/>
    <property type="chains" value="A/B=32-574"/>
</dbReference>
<dbReference type="PDB" id="6TD2">
    <property type="method" value="X-ray"/>
    <property type="resolution" value="2.80 A"/>
    <property type="chains" value="A/B=32-574"/>
</dbReference>
<dbReference type="PDB" id="7QAK">
    <property type="method" value="X-ray"/>
    <property type="resolution" value="2.60 A"/>
    <property type="chains" value="A/B=32-574"/>
</dbReference>
<dbReference type="PDB" id="7QB4">
    <property type="method" value="X-ray"/>
    <property type="resolution" value="2.50 A"/>
    <property type="chains" value="A/B=32-574"/>
</dbReference>
<dbReference type="PDB" id="7QYN">
    <property type="method" value="X-ray"/>
    <property type="resolution" value="2.50 A"/>
    <property type="chains" value="A/B=32-574"/>
</dbReference>
<dbReference type="PDB" id="7R02">
    <property type="method" value="X-ray"/>
    <property type="resolution" value="2.30 A"/>
    <property type="chains" value="A/B=32-574"/>
</dbReference>
<dbReference type="PDB" id="7R0A">
    <property type="method" value="X-ray"/>
    <property type="resolution" value="2.80 A"/>
    <property type="chains" value="A/B=32-574"/>
</dbReference>
<dbReference type="PDB" id="7R2F">
    <property type="method" value="X-ray"/>
    <property type="resolution" value="2.30 A"/>
    <property type="chains" value="A/B=32-574"/>
</dbReference>
<dbReference type="PDB" id="7R3C">
    <property type="method" value="X-ray"/>
    <property type="resolution" value="2.40 A"/>
    <property type="chains" value="A/B=32-574"/>
</dbReference>
<dbReference type="PDB" id="7R4E">
    <property type="method" value="X-ray"/>
    <property type="resolution" value="3.00 A"/>
    <property type="chains" value="A/B=32-574"/>
</dbReference>
<dbReference type="PDB" id="8ORC">
    <property type="method" value="X-ray"/>
    <property type="resolution" value="2.10 A"/>
    <property type="chains" value="A/B=32-574"/>
</dbReference>
<dbReference type="PDBsum" id="1C2B"/>
<dbReference type="PDBsum" id="1C2O"/>
<dbReference type="PDBsum" id="1J06"/>
<dbReference type="PDBsum" id="1J07"/>
<dbReference type="PDBsum" id="1KU6"/>
<dbReference type="PDBsum" id="1MAA"/>
<dbReference type="PDBsum" id="1MAH"/>
<dbReference type="PDBsum" id="1N5M"/>
<dbReference type="PDBsum" id="1N5R"/>
<dbReference type="PDBsum" id="1Q83"/>
<dbReference type="PDBsum" id="1Q84"/>
<dbReference type="PDBsum" id="2C0P"/>
<dbReference type="PDBsum" id="2C0Q"/>
<dbReference type="PDBsum" id="2GYU"/>
<dbReference type="PDBsum" id="2GYV"/>
<dbReference type="PDBsum" id="2GYW"/>
<dbReference type="PDBsum" id="2H9Y"/>
<dbReference type="PDBsum" id="2HA0"/>
<dbReference type="PDBsum" id="2HA2"/>
<dbReference type="PDBsum" id="2HA3"/>
<dbReference type="PDBsum" id="2HA4"/>
<dbReference type="PDBsum" id="2HA5"/>
<dbReference type="PDBsum" id="2HA6"/>
<dbReference type="PDBsum" id="2HA7"/>
<dbReference type="PDBsum" id="2JEY"/>
<dbReference type="PDBsum" id="2JEZ"/>
<dbReference type="PDBsum" id="2JF0"/>
<dbReference type="PDBsum" id="2JGE"/>
<dbReference type="PDBsum" id="2JGF"/>
<dbReference type="PDBsum" id="2JGI"/>
<dbReference type="PDBsum" id="2JGJ"/>
<dbReference type="PDBsum" id="2JGK"/>
<dbReference type="PDBsum" id="2JGL"/>
<dbReference type="PDBsum" id="2JGM"/>
<dbReference type="PDBsum" id="2WHP"/>
<dbReference type="PDBsum" id="2WHQ"/>
<dbReference type="PDBsum" id="2WHR"/>
<dbReference type="PDBsum" id="2WLS"/>
<dbReference type="PDBsum" id="2WU3"/>
<dbReference type="PDBsum" id="2WU4"/>
<dbReference type="PDBsum" id="2XUD"/>
<dbReference type="PDBsum" id="2XUF"/>
<dbReference type="PDBsum" id="2XUG"/>
<dbReference type="PDBsum" id="2XUH"/>
<dbReference type="PDBsum" id="2XUI"/>
<dbReference type="PDBsum" id="2XUJ"/>
<dbReference type="PDBsum" id="2XUK"/>
<dbReference type="PDBsum" id="2XUO"/>
<dbReference type="PDBsum" id="2XUP"/>
<dbReference type="PDBsum" id="2XUQ"/>
<dbReference type="PDBsum" id="2Y2U"/>
<dbReference type="PDBsum" id="2Y2V"/>
<dbReference type="PDBsum" id="3DL4"/>
<dbReference type="PDBsum" id="3DL7"/>
<dbReference type="PDBsum" id="3ZLT"/>
<dbReference type="PDBsum" id="3ZLU"/>
<dbReference type="PDBsum" id="3ZLV"/>
<dbReference type="PDBsum" id="4A16"/>
<dbReference type="PDBsum" id="4A23"/>
<dbReference type="PDBsum" id="4ARA"/>
<dbReference type="PDBsum" id="4ARB"/>
<dbReference type="PDBsum" id="4B7Z"/>
<dbReference type="PDBsum" id="4B80"/>
<dbReference type="PDBsum" id="4B81"/>
<dbReference type="PDBsum" id="4B82"/>
<dbReference type="PDBsum" id="4B83"/>
<dbReference type="PDBsum" id="4B84"/>
<dbReference type="PDBsum" id="4B85"/>
<dbReference type="PDBsum" id="4BC0"/>
<dbReference type="PDBsum" id="4BC1"/>
<dbReference type="PDBsum" id="4BTL"/>
<dbReference type="PDBsum" id="5DTI"/>
<dbReference type="PDBsum" id="5DTJ"/>
<dbReference type="PDBsum" id="5EHN"/>
<dbReference type="PDBsum" id="5EHQ"/>
<dbReference type="PDBsum" id="5EHZ"/>
<dbReference type="PDBsum" id="5EIA"/>
<dbReference type="PDBsum" id="5EIE"/>
<dbReference type="PDBsum" id="5EIH"/>
<dbReference type="PDBsum" id="5FKJ"/>
<dbReference type="PDBsum" id="5FPP"/>
<dbReference type="PDBsum" id="5FUM"/>
<dbReference type="PDBsum" id="5HCU"/>
<dbReference type="PDBsum" id="5OV9"/>
<dbReference type="PDBsum" id="6FSD"/>
<dbReference type="PDBsum" id="6FSE"/>
<dbReference type="PDBsum" id="6TD2"/>
<dbReference type="PDBsum" id="7QAK"/>
<dbReference type="PDBsum" id="7QB4"/>
<dbReference type="PDBsum" id="7QYN"/>
<dbReference type="PDBsum" id="7R02"/>
<dbReference type="PDBsum" id="7R0A"/>
<dbReference type="PDBsum" id="7R2F"/>
<dbReference type="PDBsum" id="7R3C"/>
<dbReference type="PDBsum" id="7R4E"/>
<dbReference type="PDBsum" id="8ORC"/>
<dbReference type="SMR" id="P21836"/>
<dbReference type="BioGRID" id="197921">
    <property type="interactions" value="3"/>
</dbReference>
<dbReference type="FunCoup" id="P21836">
    <property type="interactions" value="225"/>
</dbReference>
<dbReference type="IntAct" id="P21836">
    <property type="interactions" value="2"/>
</dbReference>
<dbReference type="MINT" id="P21836"/>
<dbReference type="STRING" id="10090.ENSMUSP00000024099"/>
<dbReference type="BindingDB" id="P21836"/>
<dbReference type="ChEMBL" id="CHEMBL3198"/>
<dbReference type="DrugCentral" id="P21836"/>
<dbReference type="ESTHER" id="mouse-ACHE">
    <property type="family name" value="ACHE"/>
</dbReference>
<dbReference type="MEROPS" id="S09.979"/>
<dbReference type="GlyConnect" id="2100">
    <property type="glycosylation" value="2 N-Linked glycans (1 site)"/>
</dbReference>
<dbReference type="GlyCosmos" id="P21836">
    <property type="glycosylation" value="3 sites, 2 glycans"/>
</dbReference>
<dbReference type="GlyGen" id="P21836">
    <property type="glycosylation" value="5 sites, 4 N-linked glycans (2 sites), 1 O-linked glycan (1 site)"/>
</dbReference>
<dbReference type="iPTMnet" id="P21836"/>
<dbReference type="PhosphoSitePlus" id="P21836"/>
<dbReference type="SwissPalm" id="P21836"/>
<dbReference type="PaxDb" id="10090-ENSMUSP00000024099"/>
<dbReference type="ProteomicsDB" id="285642">
    <molecule id="P21836-1"/>
</dbReference>
<dbReference type="Antibodypedia" id="16701">
    <property type="antibodies" value="777 antibodies from 43 providers"/>
</dbReference>
<dbReference type="DNASU" id="11423"/>
<dbReference type="Ensembl" id="ENSMUST00000024099.11">
    <molecule id="P21836-1"/>
    <property type="protein sequence ID" value="ENSMUSP00000024099.5"/>
    <property type="gene ID" value="ENSMUSG00000023328.15"/>
</dbReference>
<dbReference type="Ensembl" id="ENSMUST00000085934.4">
    <molecule id="P21836-1"/>
    <property type="protein sequence ID" value="ENSMUSP00000083097.4"/>
    <property type="gene ID" value="ENSMUSG00000023328.15"/>
</dbReference>
<dbReference type="GeneID" id="11423"/>
<dbReference type="KEGG" id="mmu:11423"/>
<dbReference type="UCSC" id="uc009abt.1">
    <molecule id="P21836-1"/>
    <property type="organism name" value="mouse"/>
</dbReference>
<dbReference type="AGR" id="MGI:87876"/>
<dbReference type="CTD" id="43"/>
<dbReference type="MGI" id="MGI:87876">
    <property type="gene designation" value="Ache"/>
</dbReference>
<dbReference type="VEuPathDB" id="HostDB:ENSMUSG00000023328"/>
<dbReference type="eggNOG" id="KOG4389">
    <property type="taxonomic scope" value="Eukaryota"/>
</dbReference>
<dbReference type="GeneTree" id="ENSGT00940000157637"/>
<dbReference type="InParanoid" id="P21836"/>
<dbReference type="OMA" id="CDHLVAP"/>
<dbReference type="OrthoDB" id="9000293at2759"/>
<dbReference type="PhylomeDB" id="P21836"/>
<dbReference type="TreeFam" id="TF315470"/>
<dbReference type="BRENDA" id="3.1.1.7">
    <property type="organism ID" value="3474"/>
</dbReference>
<dbReference type="SABIO-RK" id="P21836"/>
<dbReference type="BioGRID-ORCS" id="11423">
    <property type="hits" value="3 hits in 81 CRISPR screens"/>
</dbReference>
<dbReference type="ChiTaRS" id="Ache">
    <property type="organism name" value="mouse"/>
</dbReference>
<dbReference type="EvolutionaryTrace" id="P21836"/>
<dbReference type="PRO" id="PR:P21836"/>
<dbReference type="Proteomes" id="UP000000589">
    <property type="component" value="Chromosome 5"/>
</dbReference>
<dbReference type="RNAct" id="P21836">
    <property type="molecule type" value="protein"/>
</dbReference>
<dbReference type="Bgee" id="ENSMUSG00000023328">
    <property type="expression patterns" value="Expressed in medulla oblongata and 106 other cell types or tissues"/>
</dbReference>
<dbReference type="ExpressionAtlas" id="P21836">
    <property type="expression patterns" value="baseline and differential"/>
</dbReference>
<dbReference type="GO" id="GO:0005604">
    <property type="term" value="C:basement membrane"/>
    <property type="evidence" value="ECO:0000314"/>
    <property type="project" value="MGI"/>
</dbReference>
<dbReference type="GO" id="GO:0009986">
    <property type="term" value="C:cell surface"/>
    <property type="evidence" value="ECO:0000314"/>
    <property type="project" value="MGI"/>
</dbReference>
<dbReference type="GO" id="GO:0005615">
    <property type="term" value="C:extracellular space"/>
    <property type="evidence" value="ECO:0000314"/>
    <property type="project" value="MGI"/>
</dbReference>
<dbReference type="GO" id="GO:0005794">
    <property type="term" value="C:Golgi apparatus"/>
    <property type="evidence" value="ECO:0007669"/>
    <property type="project" value="Ensembl"/>
</dbReference>
<dbReference type="GO" id="GO:0031594">
    <property type="term" value="C:neuromuscular junction"/>
    <property type="evidence" value="ECO:0000314"/>
    <property type="project" value="MGI"/>
</dbReference>
<dbReference type="GO" id="GO:0048471">
    <property type="term" value="C:perinuclear region of cytoplasm"/>
    <property type="evidence" value="ECO:0007669"/>
    <property type="project" value="Ensembl"/>
</dbReference>
<dbReference type="GO" id="GO:0005886">
    <property type="term" value="C:plasma membrane"/>
    <property type="evidence" value="ECO:0000314"/>
    <property type="project" value="MGI"/>
</dbReference>
<dbReference type="GO" id="GO:0098552">
    <property type="term" value="C:side of membrane"/>
    <property type="evidence" value="ECO:0007669"/>
    <property type="project" value="UniProtKB-KW"/>
</dbReference>
<dbReference type="GO" id="GO:0045202">
    <property type="term" value="C:synapse"/>
    <property type="evidence" value="ECO:0000314"/>
    <property type="project" value="MGI"/>
</dbReference>
<dbReference type="GO" id="GO:0042166">
    <property type="term" value="F:acetylcholine binding"/>
    <property type="evidence" value="ECO:0007669"/>
    <property type="project" value="Ensembl"/>
</dbReference>
<dbReference type="GO" id="GO:0003990">
    <property type="term" value="F:acetylcholinesterase activity"/>
    <property type="evidence" value="ECO:0000314"/>
    <property type="project" value="MGI"/>
</dbReference>
<dbReference type="GO" id="GO:0005518">
    <property type="term" value="F:collagen binding"/>
    <property type="evidence" value="ECO:0007669"/>
    <property type="project" value="Ensembl"/>
</dbReference>
<dbReference type="GO" id="GO:0042802">
    <property type="term" value="F:identical protein binding"/>
    <property type="evidence" value="ECO:0000353"/>
    <property type="project" value="MGI"/>
</dbReference>
<dbReference type="GO" id="GO:0043236">
    <property type="term" value="F:laminin binding"/>
    <property type="evidence" value="ECO:0000353"/>
    <property type="project" value="MGI"/>
</dbReference>
<dbReference type="GO" id="GO:0042803">
    <property type="term" value="F:protein homodimerization activity"/>
    <property type="evidence" value="ECO:0007669"/>
    <property type="project" value="Ensembl"/>
</dbReference>
<dbReference type="GO" id="GO:0017171">
    <property type="term" value="F:serine hydrolase activity"/>
    <property type="evidence" value="ECO:0007669"/>
    <property type="project" value="Ensembl"/>
</dbReference>
<dbReference type="GO" id="GO:0006581">
    <property type="term" value="P:acetylcholine catabolic process"/>
    <property type="evidence" value="ECO:0000314"/>
    <property type="project" value="MGI"/>
</dbReference>
<dbReference type="GO" id="GO:0095500">
    <property type="term" value="P:acetylcholine receptor signaling pathway"/>
    <property type="evidence" value="ECO:0000315"/>
    <property type="project" value="MGI"/>
</dbReference>
<dbReference type="GO" id="GO:0007155">
    <property type="term" value="P:cell adhesion"/>
    <property type="evidence" value="ECO:0007669"/>
    <property type="project" value="Ensembl"/>
</dbReference>
<dbReference type="GO" id="GO:0002076">
    <property type="term" value="P:osteoblast development"/>
    <property type="evidence" value="ECO:0007669"/>
    <property type="project" value="Ensembl"/>
</dbReference>
<dbReference type="GO" id="GO:0120162">
    <property type="term" value="P:positive regulation of cold-induced thermogenesis"/>
    <property type="evidence" value="ECO:0000315"/>
    <property type="project" value="YuBioLab"/>
</dbReference>
<dbReference type="GO" id="GO:0031623">
    <property type="term" value="P:receptor internalization"/>
    <property type="evidence" value="ECO:0000315"/>
    <property type="project" value="MGI"/>
</dbReference>
<dbReference type="GO" id="GO:0001919">
    <property type="term" value="P:regulation of receptor recycling"/>
    <property type="evidence" value="ECO:0000315"/>
    <property type="project" value="MGI"/>
</dbReference>
<dbReference type="GO" id="GO:0060041">
    <property type="term" value="P:retina development in camera-type eye"/>
    <property type="evidence" value="ECO:0000315"/>
    <property type="project" value="MGI"/>
</dbReference>
<dbReference type="CDD" id="cd00312">
    <property type="entry name" value="Esterase_lipase"/>
    <property type="match status" value="1"/>
</dbReference>
<dbReference type="FunFam" id="3.40.50.1820:FF:000029">
    <property type="entry name" value="Acetylcholinesterase"/>
    <property type="match status" value="1"/>
</dbReference>
<dbReference type="Gene3D" id="3.40.50.1820">
    <property type="entry name" value="alpha/beta hydrolase"/>
    <property type="match status" value="1"/>
</dbReference>
<dbReference type="InterPro" id="IPR029058">
    <property type="entry name" value="AB_hydrolase_fold"/>
</dbReference>
<dbReference type="InterPro" id="IPR050654">
    <property type="entry name" value="AChE-related_enzymes"/>
</dbReference>
<dbReference type="InterPro" id="IPR014788">
    <property type="entry name" value="AChE_tetra"/>
</dbReference>
<dbReference type="InterPro" id="IPR002018">
    <property type="entry name" value="CarbesteraseB"/>
</dbReference>
<dbReference type="InterPro" id="IPR019826">
    <property type="entry name" value="Carboxylesterase_B_AS"/>
</dbReference>
<dbReference type="InterPro" id="IPR019819">
    <property type="entry name" value="Carboxylesterase_B_CS"/>
</dbReference>
<dbReference type="InterPro" id="IPR000997">
    <property type="entry name" value="Cholinesterase"/>
</dbReference>
<dbReference type="PANTHER" id="PTHR43918">
    <property type="entry name" value="ACETYLCHOLINESTERASE"/>
    <property type="match status" value="1"/>
</dbReference>
<dbReference type="PANTHER" id="PTHR43918:SF11">
    <property type="entry name" value="ACETYLCHOLINESTERASE"/>
    <property type="match status" value="1"/>
</dbReference>
<dbReference type="Pfam" id="PF08674">
    <property type="entry name" value="AChE_tetra"/>
    <property type="match status" value="1"/>
</dbReference>
<dbReference type="Pfam" id="PF00135">
    <property type="entry name" value="COesterase"/>
    <property type="match status" value="1"/>
</dbReference>
<dbReference type="PRINTS" id="PR00878">
    <property type="entry name" value="CHOLNESTRASE"/>
</dbReference>
<dbReference type="SUPFAM" id="SSF53474">
    <property type="entry name" value="alpha/beta-Hydrolases"/>
    <property type="match status" value="1"/>
</dbReference>
<dbReference type="PROSITE" id="PS00122">
    <property type="entry name" value="CARBOXYLESTERASE_B_1"/>
    <property type="match status" value="1"/>
</dbReference>
<dbReference type="PROSITE" id="PS00941">
    <property type="entry name" value="CARBOXYLESTERASE_B_2"/>
    <property type="match status" value="1"/>
</dbReference>
<accession>P21836</accession>
<comment type="function">
    <text>Terminates signal transduction at the neuromuscular junction by rapid hydrolysis of the acetylcholine released into the synaptic cleft.</text>
</comment>
<comment type="catalytic activity">
    <reaction>
        <text>acetylcholine + H2O = choline + acetate + H(+)</text>
        <dbReference type="Rhea" id="RHEA:17561"/>
        <dbReference type="ChEBI" id="CHEBI:15354"/>
        <dbReference type="ChEBI" id="CHEBI:15355"/>
        <dbReference type="ChEBI" id="CHEBI:15377"/>
        <dbReference type="ChEBI" id="CHEBI:15378"/>
        <dbReference type="ChEBI" id="CHEBI:30089"/>
        <dbReference type="EC" id="3.1.1.7"/>
    </reaction>
</comment>
<comment type="subunit">
    <text evidence="1 3 4">Isoform H generates GPI-anchored dimers; disulfide linked. Isoform T generates multiple structures, ranging from monomers and dimers to collagen-tailed and hydrophobic-tailed forms, in which catalytic tetramers are associated with anchoring proteins that attach them to the basal lamina or to cell membranes. In the collagen-tailed forms, isoform T subunits are associated with a specific collagen, COLQ, which triggers the formation of isoform T tetramers, from monomers and dimers (By similarity). Interacts with PRIMA1. The interaction with PRIMA1 is required to anchor it to the basal lamina of cells and organize into tetramers.</text>
</comment>
<comment type="subcellular location">
    <subcellularLocation>
        <location>Synapse</location>
    </subcellularLocation>
    <subcellularLocation>
        <location>Secreted</location>
    </subcellularLocation>
    <subcellularLocation>
        <location evidence="1">Cell membrane</location>
        <topology evidence="1">Peripheral membrane protein</topology>
    </subcellularLocation>
</comment>
<comment type="subcellular location">
    <molecule>Isoform H</molecule>
    <subcellularLocation>
        <location>Cell membrane</location>
        <topology>Lipid-anchor</topology>
        <topology>GPI-anchor</topology>
        <orientation>Extracellular side</orientation>
    </subcellularLocation>
</comment>
<comment type="alternative products">
    <event type="alternative splicing"/>
    <isoform>
        <id>P21836-1</id>
        <name>T</name>
        <sequence type="displayed"/>
    </isoform>
    <isoform>
        <id>P21836-2</id>
        <name>H</name>
        <sequence type="not described"/>
    </isoform>
</comment>
<comment type="tissue specificity">
    <text>Predominates in most expressing tissues except erythrocytes where a glycophospholipid-attached form of ACHE predominates.</text>
</comment>
<comment type="miscellaneous">
    <text>Synapses usually contain asymmetric molecules of cholinesterase, with a collagen-like part disulfide-bonded to the catalytic part. A different, globular type of cholinesterase occurs on the outer surfaces of cell membranes, including those of erythrocytes.</text>
</comment>
<comment type="miscellaneous">
    <text>This is the catalytic subunit of an asymmetric or soluble form of ACHE.</text>
</comment>
<comment type="similarity">
    <text evidence="5">Belongs to the type-B carboxylesterase/lipase family.</text>
</comment>
<sequence>MRPPWYPLHTPSLAFPLLFLLLSLLGGGARAEGREDPQLLVRVRGGQLRGIRLKAPGGPVSAFLGIPFAEPPVGSRRFMPPEPKRPWSGVLDATTFQNVCYQYVDTLYPGFEGTEMWNPNRELSEDCLYLNVWTPYPRPASPTPVLIWIYGGGFYSGAASLDVYDGRFLAQVEGAVLVSMNYRVGTFGFLALPGSREAPGNVGLLDQRLALQWVQENIAAFGGDPMSVTLFGESAGAASVGMHILSLPSRSLFHRAVLQSGTPNGPWATVSAGEARRRATLLARLVGCPPGGAGGNDTELIACLRTRPAQDLVDHEWHVLPQESIFRFSFVPVVDGDFLSDTPEALINTGDFQDLQVLVGVVKDEGSYFLVYGVPGFSKDNESLISRAQFLAGVRIGVPQASDLAAEAVVLHYTDWLHPEDPTHLRDAMSAVVGDHNVVCPVAQLAGRLAAQGARVYAYIFEHRASTLTWPLWMGVPHGYEIEFIFGLPLDPSLNYTTEERIFAQRLMKYWTNFARTGDPNDPRDSKSPQWPPYTTAAQQYVSLNLKPLEVRRGLRAQTCAFWNRFLPKLLSATDTLDEAERQWKAEFHRWSSYMVHWKNQFDHYSKQERCSDL</sequence>
<organism>
    <name type="scientific">Mus musculus</name>
    <name type="common">Mouse</name>
    <dbReference type="NCBI Taxonomy" id="10090"/>
    <lineage>
        <taxon>Eukaryota</taxon>
        <taxon>Metazoa</taxon>
        <taxon>Chordata</taxon>
        <taxon>Craniata</taxon>
        <taxon>Vertebrata</taxon>
        <taxon>Euteleostomi</taxon>
        <taxon>Mammalia</taxon>
        <taxon>Eutheria</taxon>
        <taxon>Euarchontoglires</taxon>
        <taxon>Glires</taxon>
        <taxon>Rodentia</taxon>
        <taxon>Myomorpha</taxon>
        <taxon>Muroidea</taxon>
        <taxon>Muridae</taxon>
        <taxon>Murinae</taxon>
        <taxon>Mus</taxon>
        <taxon>Mus</taxon>
    </lineage>
</organism>
<protein>
    <recommendedName>
        <fullName>Acetylcholinesterase</fullName>
        <shortName>AChE</shortName>
        <ecNumber>3.1.1.7</ecNumber>
    </recommendedName>
</protein>